<keyword id="KW-0521">NADP</keyword>
<keyword id="KW-0560">Oxidoreductase</keyword>
<keyword id="KW-0627">Porphyrin biosynthesis</keyword>
<keyword id="KW-1185">Reference proteome</keyword>
<gene>
    <name evidence="1" type="primary">hemA</name>
    <name type="ordered locus">sce1624</name>
</gene>
<feature type="chain" id="PRO_0000335074" description="Glutamyl-tRNA reductase">
    <location>
        <begin position="1"/>
        <end position="529"/>
    </location>
</feature>
<feature type="region of interest" description="Disordered" evidence="2">
    <location>
        <begin position="56"/>
        <end position="80"/>
    </location>
</feature>
<feature type="region of interest" description="Disordered" evidence="2">
    <location>
        <begin position="454"/>
        <end position="505"/>
    </location>
</feature>
<feature type="compositionally biased region" description="Pro residues" evidence="2">
    <location>
        <begin position="62"/>
        <end position="73"/>
    </location>
</feature>
<feature type="compositionally biased region" description="Low complexity" evidence="2">
    <location>
        <begin position="464"/>
        <end position="475"/>
    </location>
</feature>
<feature type="active site" description="Nucleophile" evidence="1">
    <location>
        <position position="48"/>
    </location>
</feature>
<feature type="binding site" evidence="1">
    <location>
        <begin position="47"/>
        <end position="50"/>
    </location>
    <ligand>
        <name>substrate</name>
    </ligand>
</feature>
<feature type="binding site" evidence="1">
    <location>
        <position position="125"/>
    </location>
    <ligand>
        <name>substrate</name>
    </ligand>
</feature>
<feature type="binding site" evidence="1">
    <location>
        <begin position="130"/>
        <end position="132"/>
    </location>
    <ligand>
        <name>substrate</name>
    </ligand>
</feature>
<feature type="binding site" evidence="1">
    <location>
        <position position="136"/>
    </location>
    <ligand>
        <name>substrate</name>
    </ligand>
</feature>
<feature type="binding site" evidence="1">
    <location>
        <begin position="205"/>
        <end position="210"/>
    </location>
    <ligand>
        <name>NADP(+)</name>
        <dbReference type="ChEBI" id="CHEBI:58349"/>
    </ligand>
</feature>
<feature type="site" description="Important for activity" evidence="1">
    <location>
        <position position="115"/>
    </location>
</feature>
<comment type="function">
    <text evidence="1">Catalyzes the NADPH-dependent reduction of glutamyl-tRNA(Glu) to glutamate 1-semialdehyde (GSA).</text>
</comment>
<comment type="catalytic activity">
    <reaction evidence="1">
        <text>(S)-4-amino-5-oxopentanoate + tRNA(Glu) + NADP(+) = L-glutamyl-tRNA(Glu) + NADPH + H(+)</text>
        <dbReference type="Rhea" id="RHEA:12344"/>
        <dbReference type="Rhea" id="RHEA-COMP:9663"/>
        <dbReference type="Rhea" id="RHEA-COMP:9680"/>
        <dbReference type="ChEBI" id="CHEBI:15378"/>
        <dbReference type="ChEBI" id="CHEBI:57501"/>
        <dbReference type="ChEBI" id="CHEBI:57783"/>
        <dbReference type="ChEBI" id="CHEBI:58349"/>
        <dbReference type="ChEBI" id="CHEBI:78442"/>
        <dbReference type="ChEBI" id="CHEBI:78520"/>
        <dbReference type="EC" id="1.2.1.70"/>
    </reaction>
</comment>
<comment type="pathway">
    <text evidence="1">Porphyrin-containing compound metabolism; protoporphyrin-IX biosynthesis; 5-aminolevulinate from L-glutamyl-tRNA(Glu): step 1/2.</text>
</comment>
<comment type="subunit">
    <text evidence="1">Homodimer.</text>
</comment>
<comment type="domain">
    <text evidence="1">Possesses an unusual extended V-shaped dimeric structure with each monomer consisting of three distinct domains arranged along a curved 'spinal' alpha-helix. The N-terminal catalytic domain specifically recognizes the glutamate moiety of the substrate. The second domain is the NADPH-binding domain, and the third C-terminal domain is responsible for dimerization.</text>
</comment>
<comment type="miscellaneous">
    <text evidence="1">During catalysis, the active site Cys acts as a nucleophile attacking the alpha-carbonyl group of tRNA-bound glutamate with the formation of a thioester intermediate between enzyme and glutamate, and the concomitant release of tRNA(Glu). The thioester intermediate is finally reduced by direct hydride transfer from NADPH, to form the product GSA.</text>
</comment>
<comment type="similarity">
    <text evidence="1">Belongs to the glutamyl-tRNA reductase family.</text>
</comment>
<organism>
    <name type="scientific">Sorangium cellulosum (strain So ce56)</name>
    <name type="common">Polyangium cellulosum (strain So ce56)</name>
    <dbReference type="NCBI Taxonomy" id="448385"/>
    <lineage>
        <taxon>Bacteria</taxon>
        <taxon>Pseudomonadati</taxon>
        <taxon>Myxococcota</taxon>
        <taxon>Polyangia</taxon>
        <taxon>Polyangiales</taxon>
        <taxon>Polyangiaceae</taxon>
        <taxon>Sorangium</taxon>
    </lineage>
</organism>
<name>HEM1_SORC5</name>
<sequence>MIFVGLSHKTAPIEVRERLAIGRDRLPEVLARLTAHPAIGEALVLSTCNRVEIYASPRQQAPAPPRPGSAPPPSDEELSRNNEALRAAVATLVGLGGDAVRGHLAGRVGSDAVLHLFRVAASLDSMVVGEPQILGQMKEAIEVARGAKTLGVRLGRAAHRAIKVGKRVRTETAIGAGQVSVSSVAIDLARQIFADLAGHTALLIGAGDMAEAASKLLVRAGARLIVVNRSPDRAAALAREVGGEPRPWADLERSVIDADIVISSTSSPNYVVTPDLVRRARKARKGRSLFLIDIAVPRDIDPAVNKLDSVYLYDVDDLSQIVAESVEGRAAEAARAEAIVADEAQAFEAWTLERALTPTIVGLRARTRSILVAEVERSLSGKLRHLGVAERQALAMMIDAATNKLLHVPTTRLRAMASDPRVAEHVDSLRELFDIDGAPPENAAASALAEGELRGAVDGPPTPRSARGAAPPASGARGGGSPRHADPRPQAAEDNGVYARQPGGRPAEAGVMAVANPAAAVSAAGLKGA</sequence>
<evidence type="ECO:0000255" key="1">
    <source>
        <dbReference type="HAMAP-Rule" id="MF_00087"/>
    </source>
</evidence>
<evidence type="ECO:0000256" key="2">
    <source>
        <dbReference type="SAM" id="MobiDB-lite"/>
    </source>
</evidence>
<proteinExistence type="inferred from homology"/>
<reference key="1">
    <citation type="journal article" date="2007" name="Nat. Biotechnol.">
        <title>Complete genome sequence of the myxobacterium Sorangium cellulosum.</title>
        <authorList>
            <person name="Schneiker S."/>
            <person name="Perlova O."/>
            <person name="Kaiser O."/>
            <person name="Gerth K."/>
            <person name="Alici A."/>
            <person name="Altmeyer M.O."/>
            <person name="Bartels D."/>
            <person name="Bekel T."/>
            <person name="Beyer S."/>
            <person name="Bode E."/>
            <person name="Bode H.B."/>
            <person name="Bolten C.J."/>
            <person name="Choudhuri J.V."/>
            <person name="Doss S."/>
            <person name="Elnakady Y.A."/>
            <person name="Frank B."/>
            <person name="Gaigalat L."/>
            <person name="Goesmann A."/>
            <person name="Groeger C."/>
            <person name="Gross F."/>
            <person name="Jelsbak L."/>
            <person name="Jelsbak L."/>
            <person name="Kalinowski J."/>
            <person name="Kegler C."/>
            <person name="Knauber T."/>
            <person name="Konietzny S."/>
            <person name="Kopp M."/>
            <person name="Krause L."/>
            <person name="Krug D."/>
            <person name="Linke B."/>
            <person name="Mahmud T."/>
            <person name="Martinez-Arias R."/>
            <person name="McHardy A.C."/>
            <person name="Merai M."/>
            <person name="Meyer F."/>
            <person name="Mormann S."/>
            <person name="Munoz-Dorado J."/>
            <person name="Perez J."/>
            <person name="Pradella S."/>
            <person name="Rachid S."/>
            <person name="Raddatz G."/>
            <person name="Rosenau F."/>
            <person name="Rueckert C."/>
            <person name="Sasse F."/>
            <person name="Scharfe M."/>
            <person name="Schuster S.C."/>
            <person name="Suen G."/>
            <person name="Treuner-Lange A."/>
            <person name="Velicer G.J."/>
            <person name="Vorholter F.-J."/>
            <person name="Weissman K.J."/>
            <person name="Welch R.D."/>
            <person name="Wenzel S.C."/>
            <person name="Whitworth D.E."/>
            <person name="Wilhelm S."/>
            <person name="Wittmann C."/>
            <person name="Bloecker H."/>
            <person name="Puehler A."/>
            <person name="Mueller R."/>
        </authorList>
    </citation>
    <scope>NUCLEOTIDE SEQUENCE [LARGE SCALE GENOMIC DNA]</scope>
    <source>
        <strain>So ce56</strain>
    </source>
</reference>
<accession>A9FDP5</accession>
<dbReference type="EC" id="1.2.1.70" evidence="1"/>
<dbReference type="EMBL" id="AM746676">
    <property type="protein sequence ID" value="CAN91782.1"/>
    <property type="molecule type" value="Genomic_DNA"/>
</dbReference>
<dbReference type="RefSeq" id="WP_012234259.1">
    <property type="nucleotide sequence ID" value="NC_010162.1"/>
</dbReference>
<dbReference type="SMR" id="A9FDP5"/>
<dbReference type="STRING" id="448385.sce1624"/>
<dbReference type="KEGG" id="scl:sce1624"/>
<dbReference type="eggNOG" id="COG0373">
    <property type="taxonomic scope" value="Bacteria"/>
</dbReference>
<dbReference type="HOGENOM" id="CLU_035113_2_2_7"/>
<dbReference type="OrthoDB" id="110209at2"/>
<dbReference type="BioCyc" id="SCEL448385:SCE_RS08370-MONOMER"/>
<dbReference type="UniPathway" id="UPA00251">
    <property type="reaction ID" value="UER00316"/>
</dbReference>
<dbReference type="Proteomes" id="UP000002139">
    <property type="component" value="Chromosome"/>
</dbReference>
<dbReference type="GO" id="GO:0008883">
    <property type="term" value="F:glutamyl-tRNA reductase activity"/>
    <property type="evidence" value="ECO:0007669"/>
    <property type="project" value="UniProtKB-UniRule"/>
</dbReference>
<dbReference type="GO" id="GO:0050661">
    <property type="term" value="F:NADP binding"/>
    <property type="evidence" value="ECO:0007669"/>
    <property type="project" value="InterPro"/>
</dbReference>
<dbReference type="GO" id="GO:0019353">
    <property type="term" value="P:protoporphyrinogen IX biosynthetic process from glutamate"/>
    <property type="evidence" value="ECO:0007669"/>
    <property type="project" value="TreeGrafter"/>
</dbReference>
<dbReference type="CDD" id="cd05213">
    <property type="entry name" value="NAD_bind_Glutamyl_tRNA_reduct"/>
    <property type="match status" value="1"/>
</dbReference>
<dbReference type="FunFam" id="3.30.460.30:FF:000001">
    <property type="entry name" value="Glutamyl-tRNA reductase"/>
    <property type="match status" value="1"/>
</dbReference>
<dbReference type="FunFam" id="3.40.50.720:FF:000031">
    <property type="entry name" value="Glutamyl-tRNA reductase"/>
    <property type="match status" value="1"/>
</dbReference>
<dbReference type="Gene3D" id="3.30.460.30">
    <property type="entry name" value="Glutamyl-tRNA reductase, N-terminal domain"/>
    <property type="match status" value="1"/>
</dbReference>
<dbReference type="Gene3D" id="3.40.50.720">
    <property type="entry name" value="NAD(P)-binding Rossmann-like Domain"/>
    <property type="match status" value="1"/>
</dbReference>
<dbReference type="HAMAP" id="MF_00087">
    <property type="entry name" value="Glu_tRNA_reductase"/>
    <property type="match status" value="1"/>
</dbReference>
<dbReference type="InterPro" id="IPR000343">
    <property type="entry name" value="4pyrrol_synth_GluRdtase"/>
</dbReference>
<dbReference type="InterPro" id="IPR015896">
    <property type="entry name" value="4pyrrol_synth_GluRdtase_dimer"/>
</dbReference>
<dbReference type="InterPro" id="IPR015895">
    <property type="entry name" value="4pyrrol_synth_GluRdtase_N"/>
</dbReference>
<dbReference type="InterPro" id="IPR018214">
    <property type="entry name" value="GluRdtase_CS"/>
</dbReference>
<dbReference type="InterPro" id="IPR036453">
    <property type="entry name" value="GluRdtase_dimer_dom_sf"/>
</dbReference>
<dbReference type="InterPro" id="IPR036343">
    <property type="entry name" value="GluRdtase_N_sf"/>
</dbReference>
<dbReference type="InterPro" id="IPR036291">
    <property type="entry name" value="NAD(P)-bd_dom_sf"/>
</dbReference>
<dbReference type="InterPro" id="IPR006151">
    <property type="entry name" value="Shikm_DH/Glu-tRNA_Rdtase"/>
</dbReference>
<dbReference type="NCBIfam" id="TIGR01035">
    <property type="entry name" value="hemA"/>
    <property type="match status" value="1"/>
</dbReference>
<dbReference type="PANTHER" id="PTHR43013">
    <property type="entry name" value="GLUTAMYL-TRNA REDUCTASE"/>
    <property type="match status" value="1"/>
</dbReference>
<dbReference type="PANTHER" id="PTHR43013:SF1">
    <property type="entry name" value="GLUTAMYL-TRNA REDUCTASE"/>
    <property type="match status" value="1"/>
</dbReference>
<dbReference type="Pfam" id="PF00745">
    <property type="entry name" value="GlutR_dimer"/>
    <property type="match status" value="1"/>
</dbReference>
<dbReference type="Pfam" id="PF05201">
    <property type="entry name" value="GlutR_N"/>
    <property type="match status" value="1"/>
</dbReference>
<dbReference type="Pfam" id="PF01488">
    <property type="entry name" value="Shikimate_DH"/>
    <property type="match status" value="1"/>
</dbReference>
<dbReference type="SUPFAM" id="SSF69742">
    <property type="entry name" value="Glutamyl tRNA-reductase catalytic, N-terminal domain"/>
    <property type="match status" value="1"/>
</dbReference>
<dbReference type="SUPFAM" id="SSF69075">
    <property type="entry name" value="Glutamyl tRNA-reductase dimerization domain"/>
    <property type="match status" value="1"/>
</dbReference>
<dbReference type="SUPFAM" id="SSF51735">
    <property type="entry name" value="NAD(P)-binding Rossmann-fold domains"/>
    <property type="match status" value="1"/>
</dbReference>
<dbReference type="PROSITE" id="PS00747">
    <property type="entry name" value="GLUTR"/>
    <property type="match status" value="1"/>
</dbReference>
<protein>
    <recommendedName>
        <fullName evidence="1">Glutamyl-tRNA reductase</fullName>
        <shortName evidence="1">GluTR</shortName>
        <ecNumber evidence="1">1.2.1.70</ecNumber>
    </recommendedName>
</protein>